<feature type="chain" id="PRO_0000260937" description="Large ribosomal subunit protein uL6">
    <location>
        <begin position="1"/>
        <end position="179"/>
    </location>
</feature>
<protein>
    <recommendedName>
        <fullName evidence="1">Large ribosomal subunit protein uL6</fullName>
    </recommendedName>
    <alternativeName>
        <fullName evidence="2">50S ribosomal protein L6</fullName>
    </alternativeName>
</protein>
<dbReference type="EMBL" id="AY198133">
    <property type="protein sequence ID" value="AAP58906.1"/>
    <property type="molecule type" value="Genomic_DNA"/>
</dbReference>
<dbReference type="SMR" id="Q6XYX3"/>
<dbReference type="GO" id="GO:0022625">
    <property type="term" value="C:cytosolic large ribosomal subunit"/>
    <property type="evidence" value="ECO:0007669"/>
    <property type="project" value="TreeGrafter"/>
</dbReference>
<dbReference type="GO" id="GO:0019843">
    <property type="term" value="F:rRNA binding"/>
    <property type="evidence" value="ECO:0007669"/>
    <property type="project" value="UniProtKB-UniRule"/>
</dbReference>
<dbReference type="GO" id="GO:0003735">
    <property type="term" value="F:structural constituent of ribosome"/>
    <property type="evidence" value="ECO:0007669"/>
    <property type="project" value="InterPro"/>
</dbReference>
<dbReference type="GO" id="GO:0002181">
    <property type="term" value="P:cytoplasmic translation"/>
    <property type="evidence" value="ECO:0007669"/>
    <property type="project" value="TreeGrafter"/>
</dbReference>
<dbReference type="FunFam" id="3.90.930.12:FF:000001">
    <property type="entry name" value="50S ribosomal protein L6"/>
    <property type="match status" value="1"/>
</dbReference>
<dbReference type="Gene3D" id="3.90.930.12">
    <property type="entry name" value="Ribosomal protein L6, alpha-beta domain"/>
    <property type="match status" value="2"/>
</dbReference>
<dbReference type="HAMAP" id="MF_01365_B">
    <property type="entry name" value="Ribosomal_uL6_B"/>
    <property type="match status" value="1"/>
</dbReference>
<dbReference type="InterPro" id="IPR000702">
    <property type="entry name" value="Ribosomal_uL6-like"/>
</dbReference>
<dbReference type="InterPro" id="IPR036789">
    <property type="entry name" value="Ribosomal_uL6-like_a/b-dom_sf"/>
</dbReference>
<dbReference type="InterPro" id="IPR020040">
    <property type="entry name" value="Ribosomal_uL6_a/b-dom"/>
</dbReference>
<dbReference type="InterPro" id="IPR019906">
    <property type="entry name" value="Ribosomal_uL6_bac-type"/>
</dbReference>
<dbReference type="InterPro" id="IPR002358">
    <property type="entry name" value="Ribosomal_uL6_CS"/>
</dbReference>
<dbReference type="NCBIfam" id="TIGR03654">
    <property type="entry name" value="L6_bact"/>
    <property type="match status" value="1"/>
</dbReference>
<dbReference type="PANTHER" id="PTHR11655">
    <property type="entry name" value="60S/50S RIBOSOMAL PROTEIN L6/L9"/>
    <property type="match status" value="1"/>
</dbReference>
<dbReference type="PANTHER" id="PTHR11655:SF14">
    <property type="entry name" value="LARGE RIBOSOMAL SUBUNIT PROTEIN UL6M"/>
    <property type="match status" value="1"/>
</dbReference>
<dbReference type="Pfam" id="PF00347">
    <property type="entry name" value="Ribosomal_L6"/>
    <property type="match status" value="2"/>
</dbReference>
<dbReference type="PIRSF" id="PIRSF002162">
    <property type="entry name" value="Ribosomal_L6"/>
    <property type="match status" value="1"/>
</dbReference>
<dbReference type="PRINTS" id="PR00059">
    <property type="entry name" value="RIBOSOMALL6"/>
</dbReference>
<dbReference type="SUPFAM" id="SSF56053">
    <property type="entry name" value="Ribosomal protein L6"/>
    <property type="match status" value="2"/>
</dbReference>
<dbReference type="PROSITE" id="PS00525">
    <property type="entry name" value="RIBOSOMAL_L6_1"/>
    <property type="match status" value="1"/>
</dbReference>
<evidence type="ECO:0000255" key="1">
    <source>
        <dbReference type="HAMAP-Rule" id="MF_01365"/>
    </source>
</evidence>
<evidence type="ECO:0000305" key="2"/>
<comment type="function">
    <text evidence="1">This protein binds to the 23S rRNA, and is important in its secondary structure. It is located near the subunit interface in the base of the L7/L12 stalk, and near the tRNA binding site of the peptidyltransferase center.</text>
</comment>
<comment type="subunit">
    <text evidence="1">Part of the 50S ribosomal subunit.</text>
</comment>
<comment type="similarity">
    <text evidence="1">Belongs to the universal ribosomal protein uL6 family.</text>
</comment>
<gene>
    <name evidence="1" type="primary">rplF</name>
</gene>
<proteinExistence type="inferred from homology"/>
<organism>
    <name type="scientific">Spiroplasma kunkelii</name>
    <dbReference type="NCBI Taxonomy" id="47834"/>
    <lineage>
        <taxon>Bacteria</taxon>
        <taxon>Bacillati</taxon>
        <taxon>Mycoplasmatota</taxon>
        <taxon>Mollicutes</taxon>
        <taxon>Entomoplasmatales</taxon>
        <taxon>Spiroplasmataceae</taxon>
        <taxon>Spiroplasma</taxon>
    </lineage>
</organism>
<sequence length="179" mass="19429">MSRIGNRELKIPVGVEVTIQPNNVIVKSAKGQLEQAIPSVITVAAKEGVVTTTRANDVKHSKQLHGTINSLIQGMLEGVSKGFKKELEINGVGYRAALAGNKLTLSLGYSHPIEYKIPQGITITLPKPTQIIVEGISKKLVGEVAANIRNYRKPEPYKGKGIKYKNKHIIRKEGKSAGK</sequence>
<reference key="1">
    <citation type="journal article" date="2003" name="Mol. Genet. Genomics">
        <title>Gene content and organization of an 85-kb DNA segment from the genome of the phytopathogenic mollicute Spiroplasma kunkelii.</title>
        <authorList>
            <person name="Zhao Y."/>
            <person name="Hammond R.W."/>
            <person name="Jomantiene R."/>
            <person name="Dally E.L."/>
            <person name="Lee I.-M."/>
            <person name="Jia H."/>
            <person name="Wu H."/>
            <person name="Lin S."/>
            <person name="Zhang P."/>
            <person name="Kenton S."/>
            <person name="Najar F.Z."/>
            <person name="Hua A."/>
            <person name="Roe B.A."/>
            <person name="Fletcher J."/>
            <person name="Davis R.E."/>
        </authorList>
    </citation>
    <scope>NUCLEOTIDE SEQUENCE [GENOMIC DNA]</scope>
    <source>
        <strain>CR2-3x</strain>
    </source>
</reference>
<keyword id="KW-0687">Ribonucleoprotein</keyword>
<keyword id="KW-0689">Ribosomal protein</keyword>
<keyword id="KW-0694">RNA-binding</keyword>
<keyword id="KW-0699">rRNA-binding</keyword>
<accession>Q6XYX3</accession>
<name>RL6_SPIKU</name>